<proteinExistence type="inferred from homology"/>
<dbReference type="EC" id="7.1.1.-" evidence="1"/>
<dbReference type="EMBL" id="DQ226511">
    <property type="protein sequence ID" value="ABB21006.1"/>
    <property type="molecule type" value="Genomic_DNA"/>
</dbReference>
<dbReference type="RefSeq" id="YP_762310.1">
    <property type="nucleotide sequence ID" value="NC_008359.1"/>
</dbReference>
<dbReference type="SMR" id="Q09WW8"/>
<dbReference type="GeneID" id="4290607"/>
<dbReference type="GO" id="GO:0009535">
    <property type="term" value="C:chloroplast thylakoid membrane"/>
    <property type="evidence" value="ECO:0007669"/>
    <property type="project" value="UniProtKB-SubCell"/>
</dbReference>
<dbReference type="GO" id="GO:0008137">
    <property type="term" value="F:NADH dehydrogenase (ubiquinone) activity"/>
    <property type="evidence" value="ECO:0007669"/>
    <property type="project" value="InterPro"/>
</dbReference>
<dbReference type="GO" id="GO:0048039">
    <property type="term" value="F:ubiquinone binding"/>
    <property type="evidence" value="ECO:0007669"/>
    <property type="project" value="TreeGrafter"/>
</dbReference>
<dbReference type="GO" id="GO:0042773">
    <property type="term" value="P:ATP synthesis coupled electron transport"/>
    <property type="evidence" value="ECO:0007669"/>
    <property type="project" value="InterPro"/>
</dbReference>
<dbReference type="GO" id="GO:0015990">
    <property type="term" value="P:electron transport coupled proton transport"/>
    <property type="evidence" value="ECO:0007669"/>
    <property type="project" value="TreeGrafter"/>
</dbReference>
<dbReference type="HAMAP" id="MF_00491">
    <property type="entry name" value="NDH1_NuoM"/>
    <property type="match status" value="1"/>
</dbReference>
<dbReference type="InterPro" id="IPR022997">
    <property type="entry name" value="NADH_Q_OxRdtase_chain4"/>
</dbReference>
<dbReference type="InterPro" id="IPR010227">
    <property type="entry name" value="NADH_Q_OxRdtase_chainM/4"/>
</dbReference>
<dbReference type="InterPro" id="IPR003918">
    <property type="entry name" value="NADH_UbQ_OxRdtase"/>
</dbReference>
<dbReference type="InterPro" id="IPR001750">
    <property type="entry name" value="ND/Mrp_TM"/>
</dbReference>
<dbReference type="NCBIfam" id="TIGR01972">
    <property type="entry name" value="NDH_I_M"/>
    <property type="match status" value="1"/>
</dbReference>
<dbReference type="PANTHER" id="PTHR43507:SF21">
    <property type="entry name" value="NAD(P)H-QUINONE OXIDOREDUCTASE CHAIN 4, CHLOROPLASTIC"/>
    <property type="match status" value="1"/>
</dbReference>
<dbReference type="PANTHER" id="PTHR43507">
    <property type="entry name" value="NADH-UBIQUINONE OXIDOREDUCTASE CHAIN 4"/>
    <property type="match status" value="1"/>
</dbReference>
<dbReference type="Pfam" id="PF00361">
    <property type="entry name" value="Proton_antipo_M"/>
    <property type="match status" value="1"/>
</dbReference>
<dbReference type="PRINTS" id="PR01437">
    <property type="entry name" value="NUOXDRDTASE4"/>
</dbReference>
<comment type="catalytic activity">
    <reaction evidence="1">
        <text>a plastoquinone + NADH + (n+1) H(+)(in) = a plastoquinol + NAD(+) + n H(+)(out)</text>
        <dbReference type="Rhea" id="RHEA:42608"/>
        <dbReference type="Rhea" id="RHEA-COMP:9561"/>
        <dbReference type="Rhea" id="RHEA-COMP:9562"/>
        <dbReference type="ChEBI" id="CHEBI:15378"/>
        <dbReference type="ChEBI" id="CHEBI:17757"/>
        <dbReference type="ChEBI" id="CHEBI:57540"/>
        <dbReference type="ChEBI" id="CHEBI:57945"/>
        <dbReference type="ChEBI" id="CHEBI:62192"/>
    </reaction>
</comment>
<comment type="catalytic activity">
    <reaction evidence="1">
        <text>a plastoquinone + NADPH + (n+1) H(+)(in) = a plastoquinol + NADP(+) + n H(+)(out)</text>
        <dbReference type="Rhea" id="RHEA:42612"/>
        <dbReference type="Rhea" id="RHEA-COMP:9561"/>
        <dbReference type="Rhea" id="RHEA-COMP:9562"/>
        <dbReference type="ChEBI" id="CHEBI:15378"/>
        <dbReference type="ChEBI" id="CHEBI:17757"/>
        <dbReference type="ChEBI" id="CHEBI:57783"/>
        <dbReference type="ChEBI" id="CHEBI:58349"/>
        <dbReference type="ChEBI" id="CHEBI:62192"/>
    </reaction>
</comment>
<comment type="subcellular location">
    <subcellularLocation>
        <location evidence="1">Plastid</location>
        <location evidence="1">Chloroplast thylakoid membrane</location>
        <topology evidence="1">Multi-pass membrane protein</topology>
    </subcellularLocation>
</comment>
<comment type="similarity">
    <text evidence="1">Belongs to the complex I subunit 4 family.</text>
</comment>
<protein>
    <recommendedName>
        <fullName evidence="1">NAD(P)H-quinone oxidoreductase chain 4, chloroplastic</fullName>
        <ecNumber evidence="1">7.1.1.-</ecNumber>
    </recommendedName>
    <alternativeName>
        <fullName evidence="1">NAD(P)H dehydrogenase, chain 4</fullName>
    </alternativeName>
    <alternativeName>
        <fullName evidence="1">NADH-plastoquinone oxidoreductase chain 4</fullName>
    </alternativeName>
</protein>
<sequence>MNYFPWLTIIIVLPIFAGFLILFLPHRGNKVIRWYTLCICIIELLLTTYAFGYHFQLDDPLIQLAEDYKWIDFLDFSWRLGIDGISIGPILLTGFITTLATLAARPVTRESRVFHFLMLAMYSGQIGPFSSQNLLLFFIMWELELIPVYLLLSMWGGKKRLYSATKFILYTAGSSAFLLVGILGICLSASNEPTLNFETSANQSYPVALEMLFYIGFFIAFAVKSPIIPLHTWLPDTHGEAHYSTCMLLAGILLKMGAYGLVRINMELLPHAHSIFSPWLMIVGTIQIIYAASTSPGQRNLKKRIAYSSVSHMGFIIIGLGSINDTGLNGAILQIISHGFIGAALFFLAGTSYDRIRLVYLDEMGGMAITIPKIFTTFSILSMASLALPGMSGFVAELILFFGILTSQKYLLMTKILITFVMAIGMILTPIYSLSMLRQMFYGYKLFTATNSYFVDSGPREFFVSISILLPVIAIGIYPDFVFSLSVDKVEALLSNYFYP</sequence>
<name>NU4C_MORIN</name>
<evidence type="ECO:0000255" key="1">
    <source>
        <dbReference type="HAMAP-Rule" id="MF_00491"/>
    </source>
</evidence>
<feature type="chain" id="PRO_0000275915" description="NAD(P)H-quinone oxidoreductase chain 4, chloroplastic">
    <location>
        <begin position="1"/>
        <end position="500"/>
    </location>
</feature>
<feature type="transmembrane region" description="Helical" evidence="1">
    <location>
        <begin position="4"/>
        <end position="24"/>
    </location>
</feature>
<feature type="transmembrane region" description="Helical" evidence="1">
    <location>
        <begin position="37"/>
        <end position="57"/>
    </location>
</feature>
<feature type="transmembrane region" description="Helical" evidence="1">
    <location>
        <begin position="84"/>
        <end position="104"/>
    </location>
</feature>
<feature type="transmembrane region" description="Helical" evidence="1">
    <location>
        <begin position="111"/>
        <end position="129"/>
    </location>
</feature>
<feature type="transmembrane region" description="Helical" evidence="1">
    <location>
        <begin position="134"/>
        <end position="154"/>
    </location>
</feature>
<feature type="transmembrane region" description="Helical" evidence="1">
    <location>
        <begin position="167"/>
        <end position="187"/>
    </location>
</feature>
<feature type="transmembrane region" description="Helical" evidence="1">
    <location>
        <begin position="208"/>
        <end position="228"/>
    </location>
</feature>
<feature type="transmembrane region" description="Helical" evidence="1">
    <location>
        <begin position="242"/>
        <end position="262"/>
    </location>
</feature>
<feature type="transmembrane region" description="Helical" evidence="1">
    <location>
        <begin position="272"/>
        <end position="292"/>
    </location>
</feature>
<feature type="transmembrane region" description="Helical" evidence="1">
    <location>
        <begin position="305"/>
        <end position="325"/>
    </location>
</feature>
<feature type="transmembrane region" description="Helical" evidence="1">
    <location>
        <begin position="330"/>
        <end position="350"/>
    </location>
</feature>
<feature type="transmembrane region" description="Helical" evidence="1">
    <location>
        <begin position="386"/>
        <end position="406"/>
    </location>
</feature>
<feature type="transmembrane region" description="Helical" evidence="1">
    <location>
        <begin position="416"/>
        <end position="436"/>
    </location>
</feature>
<feature type="transmembrane region" description="Helical" evidence="1">
    <location>
        <begin position="462"/>
        <end position="482"/>
    </location>
</feature>
<geneLocation type="chloroplast"/>
<organism>
    <name type="scientific">Morus indica</name>
    <name type="common">Mulberry</name>
    <dbReference type="NCBI Taxonomy" id="248361"/>
    <lineage>
        <taxon>Eukaryota</taxon>
        <taxon>Viridiplantae</taxon>
        <taxon>Streptophyta</taxon>
        <taxon>Embryophyta</taxon>
        <taxon>Tracheophyta</taxon>
        <taxon>Spermatophyta</taxon>
        <taxon>Magnoliopsida</taxon>
        <taxon>eudicotyledons</taxon>
        <taxon>Gunneridae</taxon>
        <taxon>Pentapetalae</taxon>
        <taxon>rosids</taxon>
        <taxon>fabids</taxon>
        <taxon>Rosales</taxon>
        <taxon>Moraceae</taxon>
        <taxon>Moreae</taxon>
        <taxon>Morus</taxon>
    </lineage>
</organism>
<reference key="1">
    <citation type="submission" date="2005-09" db="EMBL/GenBank/DDBJ databases">
        <title>The chloroplast genome of mulberry: structural features and comparative analysis.</title>
        <authorList>
            <person name="Ravi V."/>
            <person name="Khurana J.P."/>
            <person name="Tyagi A.K."/>
            <person name="Khurana P."/>
        </authorList>
    </citation>
    <scope>NUCLEOTIDE SEQUENCE [LARGE SCALE GENOMIC DNA]</scope>
    <source>
        <strain>cv. K2</strain>
    </source>
</reference>
<keyword id="KW-0150">Chloroplast</keyword>
<keyword id="KW-0472">Membrane</keyword>
<keyword id="KW-0520">NAD</keyword>
<keyword id="KW-0521">NADP</keyword>
<keyword id="KW-0934">Plastid</keyword>
<keyword id="KW-0618">Plastoquinone</keyword>
<keyword id="KW-0874">Quinone</keyword>
<keyword id="KW-0793">Thylakoid</keyword>
<keyword id="KW-1278">Translocase</keyword>
<keyword id="KW-0812">Transmembrane</keyword>
<keyword id="KW-1133">Transmembrane helix</keyword>
<accession>Q09WW8</accession>
<gene>
    <name evidence="1" type="primary">ndhD</name>
    <name type="ordered locus">MoinCp071</name>
</gene>